<accession>Q8ZPM3</accession>
<keyword id="KW-0997">Cell inner membrane</keyword>
<keyword id="KW-1003">Cell membrane</keyword>
<keyword id="KW-0249">Electron transport</keyword>
<keyword id="KW-0285">Flavoprotein</keyword>
<keyword id="KW-0288">FMN</keyword>
<keyword id="KW-0472">Membrane</keyword>
<keyword id="KW-0597">Phosphoprotein</keyword>
<keyword id="KW-1185">Reference proteome</keyword>
<keyword id="KW-1278">Translocase</keyword>
<keyword id="KW-0812">Transmembrane</keyword>
<keyword id="KW-1133">Transmembrane helix</keyword>
<keyword id="KW-0813">Transport</keyword>
<protein>
    <recommendedName>
        <fullName evidence="1">Ion-translocating oxidoreductase complex subunit D</fullName>
        <ecNumber evidence="1">7.-.-.-</ecNumber>
    </recommendedName>
    <alternativeName>
        <fullName evidence="1">Rsx electron transport complex subunit D</fullName>
    </alternativeName>
</protein>
<proteinExistence type="inferred from homology"/>
<organism>
    <name type="scientific">Salmonella typhimurium (strain LT2 / SGSC1412 / ATCC 700720)</name>
    <dbReference type="NCBI Taxonomy" id="99287"/>
    <lineage>
        <taxon>Bacteria</taxon>
        <taxon>Pseudomonadati</taxon>
        <taxon>Pseudomonadota</taxon>
        <taxon>Gammaproteobacteria</taxon>
        <taxon>Enterobacterales</taxon>
        <taxon>Enterobacteriaceae</taxon>
        <taxon>Salmonella</taxon>
    </lineage>
</organism>
<name>RSXD_SALTY</name>
<comment type="function">
    <text evidence="1">Part of a membrane-bound complex that couples electron transfer with translocation of ions across the membrane. Required to maintain the reduced state of SoxR.</text>
</comment>
<comment type="cofactor">
    <cofactor evidence="1">
        <name>FMN</name>
        <dbReference type="ChEBI" id="CHEBI:58210"/>
    </cofactor>
</comment>
<comment type="subunit">
    <text evidence="1">The complex is composed of six subunits: RsxA, RsxB, RsxC, RsxD, RsxE and RsxG.</text>
</comment>
<comment type="subcellular location">
    <subcellularLocation>
        <location evidence="1">Cell inner membrane</location>
        <topology evidence="1">Multi-pass membrane protein</topology>
    </subcellularLocation>
</comment>
<comment type="similarity">
    <text evidence="1">Belongs to the NqrB/RnfD family.</text>
</comment>
<dbReference type="EC" id="7.-.-.-" evidence="1"/>
<dbReference type="EMBL" id="AE006468">
    <property type="protein sequence ID" value="AAL20378.1"/>
    <property type="molecule type" value="Genomic_DNA"/>
</dbReference>
<dbReference type="RefSeq" id="WP_000231891.1">
    <property type="nucleotide sequence ID" value="NC_003197.2"/>
</dbReference>
<dbReference type="SMR" id="Q8ZPM3"/>
<dbReference type="STRING" id="99287.STM1456"/>
<dbReference type="PaxDb" id="99287-STM1456"/>
<dbReference type="KEGG" id="stm:STM1456"/>
<dbReference type="PATRIC" id="fig|99287.12.peg.1539"/>
<dbReference type="HOGENOM" id="CLU_042020_0_0_6"/>
<dbReference type="OMA" id="RLWGGYP"/>
<dbReference type="PhylomeDB" id="Q8ZPM3"/>
<dbReference type="BioCyc" id="SENT99287:STM1456-MONOMER"/>
<dbReference type="Proteomes" id="UP000001014">
    <property type="component" value="Chromosome"/>
</dbReference>
<dbReference type="GO" id="GO:0005886">
    <property type="term" value="C:plasma membrane"/>
    <property type="evidence" value="ECO:0000318"/>
    <property type="project" value="GO_Central"/>
</dbReference>
<dbReference type="GO" id="GO:0022900">
    <property type="term" value="P:electron transport chain"/>
    <property type="evidence" value="ECO:0007669"/>
    <property type="project" value="UniProtKB-UniRule"/>
</dbReference>
<dbReference type="GO" id="GO:0055085">
    <property type="term" value="P:transmembrane transport"/>
    <property type="evidence" value="ECO:0007669"/>
    <property type="project" value="InterPro"/>
</dbReference>
<dbReference type="HAMAP" id="MF_00462">
    <property type="entry name" value="RsxD_RnfD"/>
    <property type="match status" value="1"/>
</dbReference>
<dbReference type="InterPro" id="IPR004338">
    <property type="entry name" value="NqrB/RnfD"/>
</dbReference>
<dbReference type="InterPro" id="IPR011303">
    <property type="entry name" value="RnfD_bac"/>
</dbReference>
<dbReference type="NCBIfam" id="NF002011">
    <property type="entry name" value="PRK00816.1"/>
    <property type="match status" value="1"/>
</dbReference>
<dbReference type="NCBIfam" id="TIGR01946">
    <property type="entry name" value="rnfD"/>
    <property type="match status" value="1"/>
</dbReference>
<dbReference type="PANTHER" id="PTHR30578">
    <property type="entry name" value="ELECTRON TRANSPORT COMPLEX PROTEIN RNFD"/>
    <property type="match status" value="1"/>
</dbReference>
<dbReference type="PANTHER" id="PTHR30578:SF0">
    <property type="entry name" value="ION-TRANSLOCATING OXIDOREDUCTASE COMPLEX SUBUNIT D"/>
    <property type="match status" value="1"/>
</dbReference>
<dbReference type="Pfam" id="PF03116">
    <property type="entry name" value="NQR2_RnfD_RnfE"/>
    <property type="match status" value="1"/>
</dbReference>
<gene>
    <name evidence="1" type="primary">rsxD</name>
    <name type="ordered locus">STM1456</name>
</gene>
<reference key="1">
    <citation type="journal article" date="2001" name="Nature">
        <title>Complete genome sequence of Salmonella enterica serovar Typhimurium LT2.</title>
        <authorList>
            <person name="McClelland M."/>
            <person name="Sanderson K.E."/>
            <person name="Spieth J."/>
            <person name="Clifton S.W."/>
            <person name="Latreille P."/>
            <person name="Courtney L."/>
            <person name="Porwollik S."/>
            <person name="Ali J."/>
            <person name="Dante M."/>
            <person name="Du F."/>
            <person name="Hou S."/>
            <person name="Layman D."/>
            <person name="Leonard S."/>
            <person name="Nguyen C."/>
            <person name="Scott K."/>
            <person name="Holmes A."/>
            <person name="Grewal N."/>
            <person name="Mulvaney E."/>
            <person name="Ryan E."/>
            <person name="Sun H."/>
            <person name="Florea L."/>
            <person name="Miller W."/>
            <person name="Stoneking T."/>
            <person name="Nhan M."/>
            <person name="Waterston R."/>
            <person name="Wilson R.K."/>
        </authorList>
    </citation>
    <scope>NUCLEOTIDE SEQUENCE [LARGE SCALE GENOMIC DNA]</scope>
    <source>
        <strain>LT2 / SGSC1412 / ATCC 700720</strain>
    </source>
</reference>
<sequence length="352" mass="38266">MVFRIASSPYTHNQRQTSRIMLLVLIAALPGIAAQTWFFGWGTLFQIVLAAITALVAEAIVLRLRKQSVASHLQDYSALLTGLLLAVSIPPLAPWWMVVLGTGFAIIIAKQLYGGLGQNPFNPAMIGYVVLLISFPVQMTSWLPPYEIAATTPDMLDTLRMIFTGHTASGGDMTLLRIGIDGISQATPLDTFKTSLRAGHSVEQIMQYPIYSGALAGVGWQWVNLAWLVGGVFLLWQKAIRWHIPVSFLLTLALCAALGWLFSPATLASPQLHLLSGATMLGAFFILTDPVTASTTNRGRLIFGALAGVLVWLIRSFGGYPDGVAFAVLLANITVPLIDYYTRPRVYGHRKG</sequence>
<feature type="chain" id="PRO_0000074462" description="Ion-translocating oxidoreductase complex subunit D">
    <location>
        <begin position="1"/>
        <end position="352"/>
    </location>
</feature>
<feature type="transmembrane region" description="Helical" evidence="1">
    <location>
        <begin position="20"/>
        <end position="40"/>
    </location>
</feature>
<feature type="transmembrane region" description="Helical" evidence="1">
    <location>
        <begin position="42"/>
        <end position="62"/>
    </location>
</feature>
<feature type="transmembrane region" description="Helical" evidence="1">
    <location>
        <begin position="69"/>
        <end position="91"/>
    </location>
</feature>
<feature type="transmembrane region" description="Helical" evidence="1">
    <location>
        <begin position="123"/>
        <end position="143"/>
    </location>
</feature>
<feature type="transmembrane region" description="Helical" evidence="1">
    <location>
        <begin position="215"/>
        <end position="235"/>
    </location>
</feature>
<feature type="transmembrane region" description="Helical" evidence="1">
    <location>
        <begin position="242"/>
        <end position="262"/>
    </location>
</feature>
<feature type="transmembrane region" description="Helical" evidence="1">
    <location>
        <begin position="267"/>
        <end position="287"/>
    </location>
</feature>
<feature type="transmembrane region" description="Helical" evidence="1">
    <location>
        <begin position="301"/>
        <end position="321"/>
    </location>
</feature>
<feature type="transmembrane region" description="Helical" evidence="1">
    <location>
        <begin position="322"/>
        <end position="342"/>
    </location>
</feature>
<feature type="modified residue" description="FMN phosphoryl threonine" evidence="1">
    <location>
        <position position="187"/>
    </location>
</feature>
<evidence type="ECO:0000255" key="1">
    <source>
        <dbReference type="HAMAP-Rule" id="MF_00462"/>
    </source>
</evidence>